<reference key="1">
    <citation type="journal article" date="1998" name="DNA Res.">
        <title>Complete sequence and gene organization of the genome of a hyper-thermophilic archaebacterium, Pyrococcus horikoshii OT3.</title>
        <authorList>
            <person name="Kawarabayasi Y."/>
            <person name="Sawada M."/>
            <person name="Horikawa H."/>
            <person name="Haikawa Y."/>
            <person name="Hino Y."/>
            <person name="Yamamoto S."/>
            <person name="Sekine M."/>
            <person name="Baba S."/>
            <person name="Kosugi H."/>
            <person name="Hosoyama A."/>
            <person name="Nagai Y."/>
            <person name="Sakai M."/>
            <person name="Ogura K."/>
            <person name="Otsuka R."/>
            <person name="Nakazawa H."/>
            <person name="Takamiya M."/>
            <person name="Ohfuku Y."/>
            <person name="Funahashi T."/>
            <person name="Tanaka T."/>
            <person name="Kudoh Y."/>
            <person name="Yamazaki J."/>
            <person name="Kushida N."/>
            <person name="Oguchi A."/>
            <person name="Aoki K."/>
            <person name="Yoshizawa T."/>
            <person name="Nakamura Y."/>
            <person name="Robb F.T."/>
            <person name="Horikoshi K."/>
            <person name="Masuchi Y."/>
            <person name="Shizuya H."/>
            <person name="Kikuchi H."/>
        </authorList>
    </citation>
    <scope>NUCLEOTIDE SEQUENCE [LARGE SCALE GENOMIC DNA]</scope>
    <source>
        <strain>ATCC 700860 / DSM 12428 / JCM 9974 / NBRC 100139 / OT-3</strain>
    </source>
</reference>
<reference key="2">
    <citation type="journal article" date="2009" name="Biosci. Biotechnol. Biochem.">
        <title>Purification and characterization of the first archaeal glutamate decarboxylase from Pyrococcus horikoshii.</title>
        <authorList>
            <person name="Kim H.W."/>
            <person name="Kashima Y."/>
            <person name="Ishikawa K."/>
            <person name="Yamano N."/>
        </authorList>
    </citation>
    <scope>FUNCTION</scope>
    <scope>CATALYTIC ACTIVITY</scope>
    <scope>COFACTOR</scope>
    <scope>BIOPHYSICOCHEMICAL PROPERTIES</scope>
    <scope>SUBUNIT</scope>
</reference>
<gene>
    <name evidence="1" type="primary">mfnA</name>
    <name type="ordered locus">PH0937</name>
</gene>
<protein>
    <recommendedName>
        <fullName evidence="4">L-aspartate/L-glutamate decarboxylase</fullName>
        <shortName evidence="4">ADC/GAD</shortName>
        <ecNumber evidence="1 2">4.1.1.11</ecNumber>
        <ecNumber evidence="2">4.1.1.15</ecNumber>
    </recommendedName>
    <alternativeName>
        <fullName evidence="3">PhGAD</fullName>
    </alternativeName>
</protein>
<name>MFNA_PYRHO</name>
<comment type="function">
    <text evidence="2">Catalyzes the decarboxylation of L-aspartate to produce beta-alanine, and the decarboxylation of L-glutamate to produce 4-aminobutanoate. Can also use cysteate and, to a lesser extent, cysteine sulfite (3-sulfino-L-alanine), but not L-tyrosine. Specific activities toward L-aspartate and cysteate are higher than toward L-glutamate.</text>
</comment>
<comment type="catalytic activity">
    <reaction evidence="1 2">
        <text>L-aspartate + H(+) = beta-alanine + CO2</text>
        <dbReference type="Rhea" id="RHEA:19497"/>
        <dbReference type="ChEBI" id="CHEBI:15378"/>
        <dbReference type="ChEBI" id="CHEBI:16526"/>
        <dbReference type="ChEBI" id="CHEBI:29991"/>
        <dbReference type="ChEBI" id="CHEBI:57966"/>
        <dbReference type="EC" id="4.1.1.11"/>
    </reaction>
</comment>
<comment type="catalytic activity">
    <reaction evidence="2">
        <text>L-glutamate + H(+) = 4-aminobutanoate + CO2</text>
        <dbReference type="Rhea" id="RHEA:17785"/>
        <dbReference type="ChEBI" id="CHEBI:15378"/>
        <dbReference type="ChEBI" id="CHEBI:16526"/>
        <dbReference type="ChEBI" id="CHEBI:29985"/>
        <dbReference type="ChEBI" id="CHEBI:59888"/>
        <dbReference type="EC" id="4.1.1.15"/>
    </reaction>
</comment>
<comment type="catalytic activity">
    <reaction evidence="2">
        <text>L-cysteate + H(+) = taurine + CO2</text>
        <dbReference type="Rhea" id="RHEA:25221"/>
        <dbReference type="ChEBI" id="CHEBI:15378"/>
        <dbReference type="ChEBI" id="CHEBI:16526"/>
        <dbReference type="ChEBI" id="CHEBI:58090"/>
        <dbReference type="ChEBI" id="CHEBI:507393"/>
    </reaction>
</comment>
<comment type="catalytic activity">
    <reaction evidence="2">
        <text>3-sulfino-L-alanine + H(+) = hypotaurine + CO2</text>
        <dbReference type="Rhea" id="RHEA:16877"/>
        <dbReference type="ChEBI" id="CHEBI:15378"/>
        <dbReference type="ChEBI" id="CHEBI:16526"/>
        <dbReference type="ChEBI" id="CHEBI:57853"/>
        <dbReference type="ChEBI" id="CHEBI:61085"/>
    </reaction>
</comment>
<comment type="cofactor">
    <cofactor evidence="1 2">
        <name>pyridoxal 5'-phosphate</name>
        <dbReference type="ChEBI" id="CHEBI:597326"/>
    </cofactor>
</comment>
<comment type="biophysicochemical properties">
    <kinetics>
        <KM evidence="2">1.2 mM for L-aspartate</KM>
        <KM evidence="2">3.9 mM for L-glutamate</KM>
        <KM evidence="2">2.2 mM for cysteate</KM>
        <KM evidence="2">32.6 mM for cysteine sulfite</KM>
        <text evidence="2">kcat is 0.34 sec(-1) with L-aspartate as substrate. kcat is 0.26 sec(-1) with L-glutamate as substrate. kcat is 0.65 sec(-1) with cysteate as substrate. kcat is 0.03 sec(-1) with cysteine sulfite as substrate.</text>
    </kinetics>
    <phDependence>
        <text evidence="2">Optimum pH is 8.0 with glutamate as substrate.</text>
    </phDependence>
    <temperatureDependence>
        <text evidence="2">Optimum temperature is higher than 97 degrees Celsius with glutamate as substrate.</text>
    </temperatureDependence>
</comment>
<comment type="pathway">
    <text evidence="1">Cofactor biosynthesis; coenzyme A biosynthesis.</text>
</comment>
<comment type="subunit">
    <text evidence="2">Monomer.</text>
</comment>
<comment type="similarity">
    <text evidence="1">Belongs to the group II decarboxylase family. MfnA subfamily.</text>
</comment>
<organism>
    <name type="scientific">Pyrococcus horikoshii (strain ATCC 700860 / DSM 12428 / JCM 9974 / NBRC 100139 / OT-3)</name>
    <dbReference type="NCBI Taxonomy" id="70601"/>
    <lineage>
        <taxon>Archaea</taxon>
        <taxon>Methanobacteriati</taxon>
        <taxon>Methanobacteriota</taxon>
        <taxon>Thermococci</taxon>
        <taxon>Thermococcales</taxon>
        <taxon>Thermococcaceae</taxon>
        <taxon>Pyrococcus</taxon>
    </lineage>
</organism>
<dbReference type="EC" id="4.1.1.11" evidence="1 2"/>
<dbReference type="EC" id="4.1.1.15" evidence="2"/>
<dbReference type="EMBL" id="BA000001">
    <property type="protein sequence ID" value="BAA30034.1"/>
    <property type="molecule type" value="Genomic_DNA"/>
</dbReference>
<dbReference type="PIR" id="D71084">
    <property type="entry name" value="D71084"/>
</dbReference>
<dbReference type="RefSeq" id="WP_010885027.1">
    <property type="nucleotide sequence ID" value="NC_000961.1"/>
</dbReference>
<dbReference type="SMR" id="O58679"/>
<dbReference type="STRING" id="70601.gene:9377892"/>
<dbReference type="EnsemblBacteria" id="BAA30034">
    <property type="protein sequence ID" value="BAA30034"/>
    <property type="gene ID" value="BAA30034"/>
</dbReference>
<dbReference type="GeneID" id="1443262"/>
<dbReference type="KEGG" id="pho:PH0937"/>
<dbReference type="eggNOG" id="arCOG00027">
    <property type="taxonomic scope" value="Archaea"/>
</dbReference>
<dbReference type="OrthoDB" id="56891at2157"/>
<dbReference type="UniPathway" id="UPA00241"/>
<dbReference type="Proteomes" id="UP000000752">
    <property type="component" value="Chromosome"/>
</dbReference>
<dbReference type="GO" id="GO:0004068">
    <property type="term" value="F:aspartate 1-decarboxylase activity"/>
    <property type="evidence" value="ECO:0000314"/>
    <property type="project" value="UniProtKB"/>
</dbReference>
<dbReference type="GO" id="GO:0004351">
    <property type="term" value="F:glutamate decarboxylase activity"/>
    <property type="evidence" value="ECO:0000314"/>
    <property type="project" value="UniProtKB"/>
</dbReference>
<dbReference type="GO" id="GO:0030170">
    <property type="term" value="F:pyridoxal phosphate binding"/>
    <property type="evidence" value="ECO:0007669"/>
    <property type="project" value="UniProtKB-UniRule"/>
</dbReference>
<dbReference type="GO" id="GO:0004782">
    <property type="term" value="F:sulfinoalanine decarboxylase activity"/>
    <property type="evidence" value="ECO:0007669"/>
    <property type="project" value="RHEA"/>
</dbReference>
<dbReference type="GO" id="GO:0019752">
    <property type="term" value="P:carboxylic acid metabolic process"/>
    <property type="evidence" value="ECO:0007669"/>
    <property type="project" value="InterPro"/>
</dbReference>
<dbReference type="GO" id="GO:0015937">
    <property type="term" value="P:coenzyme A biosynthetic process"/>
    <property type="evidence" value="ECO:0007669"/>
    <property type="project" value="UniProtKB-UniRule"/>
</dbReference>
<dbReference type="FunFam" id="3.40.640.10:FF:000125">
    <property type="entry name" value="Probable L-tyrosine/L-aspartate decarboxylase"/>
    <property type="match status" value="1"/>
</dbReference>
<dbReference type="Gene3D" id="3.90.1150.10">
    <property type="entry name" value="Aspartate Aminotransferase, domain 1"/>
    <property type="match status" value="1"/>
</dbReference>
<dbReference type="Gene3D" id="3.40.640.10">
    <property type="entry name" value="Type I PLP-dependent aspartate aminotransferase-like (Major domain)"/>
    <property type="match status" value="1"/>
</dbReference>
<dbReference type="HAMAP" id="MF_01610">
    <property type="entry name" value="MfnA_decarbox"/>
    <property type="match status" value="1"/>
</dbReference>
<dbReference type="InterPro" id="IPR050477">
    <property type="entry name" value="GrpII_AminoAcid_Decarb"/>
</dbReference>
<dbReference type="InterPro" id="IPR020931">
    <property type="entry name" value="MfnA"/>
</dbReference>
<dbReference type="InterPro" id="IPR002129">
    <property type="entry name" value="PyrdxlP-dep_de-COase"/>
</dbReference>
<dbReference type="InterPro" id="IPR015424">
    <property type="entry name" value="PyrdxlP-dep_Trfase"/>
</dbReference>
<dbReference type="InterPro" id="IPR015421">
    <property type="entry name" value="PyrdxlP-dep_Trfase_major"/>
</dbReference>
<dbReference type="InterPro" id="IPR015422">
    <property type="entry name" value="PyrdxlP-dep_Trfase_small"/>
</dbReference>
<dbReference type="InterPro" id="IPR021115">
    <property type="entry name" value="Pyridoxal-P_BS"/>
</dbReference>
<dbReference type="NCBIfam" id="TIGR03812">
    <property type="entry name" value="tyr_de_CO2_Arch"/>
    <property type="match status" value="1"/>
</dbReference>
<dbReference type="PANTHER" id="PTHR42735">
    <property type="match status" value="1"/>
</dbReference>
<dbReference type="PANTHER" id="PTHR42735:SF6">
    <property type="entry name" value="SPHINGOSINE-1-PHOSPHATE LYASE 1"/>
    <property type="match status" value="1"/>
</dbReference>
<dbReference type="Pfam" id="PF00282">
    <property type="entry name" value="Pyridoxal_deC"/>
    <property type="match status" value="1"/>
</dbReference>
<dbReference type="SUPFAM" id="SSF53383">
    <property type="entry name" value="PLP-dependent transferases"/>
    <property type="match status" value="1"/>
</dbReference>
<dbReference type="PROSITE" id="PS00392">
    <property type="entry name" value="DDC_GAD_HDC_YDC"/>
    <property type="match status" value="1"/>
</dbReference>
<evidence type="ECO:0000255" key="1">
    <source>
        <dbReference type="HAMAP-Rule" id="MF_01610"/>
    </source>
</evidence>
<evidence type="ECO:0000269" key="2">
    <source>
    </source>
</evidence>
<evidence type="ECO:0000303" key="3">
    <source>
    </source>
</evidence>
<evidence type="ECO:0000305" key="4"/>
<accession>O58679</accession>
<sequence length="383" mass="42694">MKFPRIGLPKEKVIELINEKTKKDLTFSSGKILGSMCTMPHDLAIEVYTKYIDRNLGDPGLHPGTRKIEEEVIEMISDLLHLEKGHGHIVSGGTEANILAVRAFRNLSDVEKPELILPKSAHFSFIKAGEMLGVKLVWAELNPDYTVDVRDVEAKISDNTIGIVGIAGTTGLGVVDDIPALSDLARDYGIPLHVDAAFGGFVIPFAKELGYELPDFDFKLKGVQSITIDPHKMGMAPIPAGGIVFRRKKYLKAISVLAPYLAGGKVWQATITGTRPGASVIAVWALIKHLGFEGYMRIVERAMKLSRWFAEEIKKINNAWLVREPMLNIVSFQTKNLKKVERELKSRGWGISAHRGYIRIVFMPHVTREMIEEFLKDLKEVLS</sequence>
<proteinExistence type="evidence at protein level"/>
<keyword id="KW-0210">Decarboxylase</keyword>
<keyword id="KW-0456">Lyase</keyword>
<keyword id="KW-0663">Pyridoxal phosphate</keyword>
<feature type="chain" id="PRO_0000147030" description="L-aspartate/L-glutamate decarboxylase">
    <location>
        <begin position="1"/>
        <end position="383"/>
    </location>
</feature>
<feature type="modified residue" description="N6-(pyridoxal phosphate)lysine" evidence="1">
    <location>
        <position position="232"/>
    </location>
</feature>